<accession>A6VXM6</accession>
<comment type="function">
    <text evidence="1">Catalyzes the reversible interconversion of serine and glycine with tetrahydrofolate (THF) serving as the one-carbon carrier. This reaction serves as the major source of one-carbon groups required for the biosynthesis of purines, thymidylate, methionine, and other important biomolecules. Also exhibits THF-independent aldolase activity toward beta-hydroxyamino acids, producing glycine and aldehydes, via a retro-aldol mechanism.</text>
</comment>
<comment type="catalytic activity">
    <reaction evidence="1">
        <text>(6R)-5,10-methylene-5,6,7,8-tetrahydrofolate + glycine + H2O = (6S)-5,6,7,8-tetrahydrofolate + L-serine</text>
        <dbReference type="Rhea" id="RHEA:15481"/>
        <dbReference type="ChEBI" id="CHEBI:15377"/>
        <dbReference type="ChEBI" id="CHEBI:15636"/>
        <dbReference type="ChEBI" id="CHEBI:33384"/>
        <dbReference type="ChEBI" id="CHEBI:57305"/>
        <dbReference type="ChEBI" id="CHEBI:57453"/>
        <dbReference type="EC" id="2.1.2.1"/>
    </reaction>
</comment>
<comment type="cofactor">
    <cofactor evidence="1">
        <name>pyridoxal 5'-phosphate</name>
        <dbReference type="ChEBI" id="CHEBI:597326"/>
    </cofactor>
</comment>
<comment type="pathway">
    <text evidence="1">One-carbon metabolism; tetrahydrofolate interconversion.</text>
</comment>
<comment type="pathway">
    <text evidence="1">Amino-acid biosynthesis; glycine biosynthesis; glycine from L-serine: step 1/1.</text>
</comment>
<comment type="subunit">
    <text evidence="1">Homodimer.</text>
</comment>
<comment type="subcellular location">
    <subcellularLocation>
        <location evidence="1">Cytoplasm</location>
    </subcellularLocation>
</comment>
<comment type="similarity">
    <text evidence="1">Belongs to the SHMT family.</text>
</comment>
<organism>
    <name type="scientific">Marinomonas sp. (strain MWYL1)</name>
    <dbReference type="NCBI Taxonomy" id="400668"/>
    <lineage>
        <taxon>Bacteria</taxon>
        <taxon>Pseudomonadati</taxon>
        <taxon>Pseudomonadota</taxon>
        <taxon>Gammaproteobacteria</taxon>
        <taxon>Oceanospirillales</taxon>
        <taxon>Oceanospirillaceae</taxon>
        <taxon>Marinomonas</taxon>
    </lineage>
</organism>
<protein>
    <recommendedName>
        <fullName evidence="1">Serine hydroxymethyltransferase</fullName>
        <shortName evidence="1">SHMT</shortName>
        <shortName evidence="1">Serine methylase</shortName>
        <ecNumber evidence="1">2.1.2.1</ecNumber>
    </recommendedName>
</protein>
<sequence length="425" mass="45756">MANTEAFFSQTLAERDPELFATITEEQERQETGIELIASENITSKAVLEAQGSVLTNKYAEGYPHRRYYGGCEAVDVTEQLAIDRAKKLFNCEFVNVQPHSGAQANGAVMLALLQPGDTIMGMSLSSGGHLTHGAAPAQSGKWFNAVQYEVSPETLLIDYDAIEAQALECKPKMIIAGGSAIPRQIDFKRFREIADKVGAYLFVDMAHIAGLVATGVHPSPLPHAHVVTTTTHKTLRGPRGGMILSNDLDLGKKINSAVFPGYQGGPLMHVIAGKAVAFGEALKPEFTDYIKQVVANAKALAEVMVERGCDIVTGGTDTHLMLVDLRPKGLKGNAADAALERAGITCNKNGIPFDTEKPMVTSGIRLGTPAATSRGFGIEEFQKVGHLISDVLDGLVEMPEGNPEVEARVLAEVRELCKRFPLYR</sequence>
<dbReference type="EC" id="2.1.2.1" evidence="1"/>
<dbReference type="EMBL" id="CP000749">
    <property type="protein sequence ID" value="ABR71205.1"/>
    <property type="molecule type" value="Genomic_DNA"/>
</dbReference>
<dbReference type="SMR" id="A6VXM6"/>
<dbReference type="STRING" id="400668.Mmwyl1_2283"/>
<dbReference type="KEGG" id="mmw:Mmwyl1_2283"/>
<dbReference type="eggNOG" id="COG0112">
    <property type="taxonomic scope" value="Bacteria"/>
</dbReference>
<dbReference type="HOGENOM" id="CLU_022477_2_1_6"/>
<dbReference type="OrthoDB" id="9803846at2"/>
<dbReference type="UniPathway" id="UPA00193"/>
<dbReference type="UniPathway" id="UPA00288">
    <property type="reaction ID" value="UER01023"/>
</dbReference>
<dbReference type="GO" id="GO:0005829">
    <property type="term" value="C:cytosol"/>
    <property type="evidence" value="ECO:0007669"/>
    <property type="project" value="TreeGrafter"/>
</dbReference>
<dbReference type="GO" id="GO:0004372">
    <property type="term" value="F:glycine hydroxymethyltransferase activity"/>
    <property type="evidence" value="ECO:0007669"/>
    <property type="project" value="UniProtKB-UniRule"/>
</dbReference>
<dbReference type="GO" id="GO:0030170">
    <property type="term" value="F:pyridoxal phosphate binding"/>
    <property type="evidence" value="ECO:0007669"/>
    <property type="project" value="UniProtKB-UniRule"/>
</dbReference>
<dbReference type="GO" id="GO:0019264">
    <property type="term" value="P:glycine biosynthetic process from serine"/>
    <property type="evidence" value="ECO:0007669"/>
    <property type="project" value="UniProtKB-UniRule"/>
</dbReference>
<dbReference type="GO" id="GO:0035999">
    <property type="term" value="P:tetrahydrofolate interconversion"/>
    <property type="evidence" value="ECO:0007669"/>
    <property type="project" value="UniProtKB-UniRule"/>
</dbReference>
<dbReference type="CDD" id="cd00378">
    <property type="entry name" value="SHMT"/>
    <property type="match status" value="1"/>
</dbReference>
<dbReference type="FunFam" id="3.40.640.10:FF:000001">
    <property type="entry name" value="Serine hydroxymethyltransferase"/>
    <property type="match status" value="1"/>
</dbReference>
<dbReference type="Gene3D" id="3.90.1150.10">
    <property type="entry name" value="Aspartate Aminotransferase, domain 1"/>
    <property type="match status" value="1"/>
</dbReference>
<dbReference type="Gene3D" id="3.40.640.10">
    <property type="entry name" value="Type I PLP-dependent aspartate aminotransferase-like (Major domain)"/>
    <property type="match status" value="1"/>
</dbReference>
<dbReference type="HAMAP" id="MF_00051">
    <property type="entry name" value="SHMT"/>
    <property type="match status" value="1"/>
</dbReference>
<dbReference type="InterPro" id="IPR015424">
    <property type="entry name" value="PyrdxlP-dep_Trfase"/>
</dbReference>
<dbReference type="InterPro" id="IPR015421">
    <property type="entry name" value="PyrdxlP-dep_Trfase_major"/>
</dbReference>
<dbReference type="InterPro" id="IPR015422">
    <property type="entry name" value="PyrdxlP-dep_Trfase_small"/>
</dbReference>
<dbReference type="InterPro" id="IPR001085">
    <property type="entry name" value="Ser_HO-MeTrfase"/>
</dbReference>
<dbReference type="InterPro" id="IPR049943">
    <property type="entry name" value="Ser_HO-MeTrfase-like"/>
</dbReference>
<dbReference type="InterPro" id="IPR019798">
    <property type="entry name" value="Ser_HO-MeTrfase_PLP_BS"/>
</dbReference>
<dbReference type="InterPro" id="IPR039429">
    <property type="entry name" value="SHMT-like_dom"/>
</dbReference>
<dbReference type="NCBIfam" id="NF000586">
    <property type="entry name" value="PRK00011.1"/>
    <property type="match status" value="1"/>
</dbReference>
<dbReference type="PANTHER" id="PTHR11680">
    <property type="entry name" value="SERINE HYDROXYMETHYLTRANSFERASE"/>
    <property type="match status" value="1"/>
</dbReference>
<dbReference type="PANTHER" id="PTHR11680:SF35">
    <property type="entry name" value="SERINE HYDROXYMETHYLTRANSFERASE 1"/>
    <property type="match status" value="1"/>
</dbReference>
<dbReference type="Pfam" id="PF00464">
    <property type="entry name" value="SHMT"/>
    <property type="match status" value="1"/>
</dbReference>
<dbReference type="PIRSF" id="PIRSF000412">
    <property type="entry name" value="SHMT"/>
    <property type="match status" value="1"/>
</dbReference>
<dbReference type="SUPFAM" id="SSF53383">
    <property type="entry name" value="PLP-dependent transferases"/>
    <property type="match status" value="1"/>
</dbReference>
<dbReference type="PROSITE" id="PS00096">
    <property type="entry name" value="SHMT"/>
    <property type="match status" value="1"/>
</dbReference>
<keyword id="KW-0028">Amino-acid biosynthesis</keyword>
<keyword id="KW-0963">Cytoplasm</keyword>
<keyword id="KW-0554">One-carbon metabolism</keyword>
<keyword id="KW-0663">Pyridoxal phosphate</keyword>
<keyword id="KW-0808">Transferase</keyword>
<gene>
    <name evidence="1" type="primary">glyA</name>
    <name type="ordered locus">Mmwyl1_2283</name>
</gene>
<evidence type="ECO:0000255" key="1">
    <source>
        <dbReference type="HAMAP-Rule" id="MF_00051"/>
    </source>
</evidence>
<reference key="1">
    <citation type="submission" date="2007-06" db="EMBL/GenBank/DDBJ databases">
        <title>Complete sequence of Marinomonas sp. MWYL1.</title>
        <authorList>
            <consortium name="US DOE Joint Genome Institute"/>
            <person name="Copeland A."/>
            <person name="Lucas S."/>
            <person name="Lapidus A."/>
            <person name="Barry K."/>
            <person name="Glavina del Rio T."/>
            <person name="Dalin E."/>
            <person name="Tice H."/>
            <person name="Pitluck S."/>
            <person name="Kiss H."/>
            <person name="Brettin T."/>
            <person name="Bruce D."/>
            <person name="Detter J.C."/>
            <person name="Han C."/>
            <person name="Schmutz J."/>
            <person name="Larimer F."/>
            <person name="Land M."/>
            <person name="Hauser L."/>
            <person name="Kyrpides N."/>
            <person name="Kim E."/>
            <person name="Johnston A.W.B."/>
            <person name="Todd J.D."/>
            <person name="Rogers R."/>
            <person name="Wexler M."/>
            <person name="Bond P.L."/>
            <person name="Li Y."/>
            <person name="Richardson P."/>
        </authorList>
    </citation>
    <scope>NUCLEOTIDE SEQUENCE [LARGE SCALE GENOMIC DNA]</scope>
    <source>
        <strain>MWYL1</strain>
    </source>
</reference>
<name>GLYA_MARMS</name>
<proteinExistence type="inferred from homology"/>
<feature type="chain" id="PRO_0000369936" description="Serine hydroxymethyltransferase">
    <location>
        <begin position="1"/>
        <end position="425"/>
    </location>
</feature>
<feature type="binding site" evidence="1">
    <location>
        <position position="125"/>
    </location>
    <ligand>
        <name>(6S)-5,6,7,8-tetrahydrofolate</name>
        <dbReference type="ChEBI" id="CHEBI:57453"/>
    </ligand>
</feature>
<feature type="binding site" evidence="1">
    <location>
        <begin position="129"/>
        <end position="131"/>
    </location>
    <ligand>
        <name>(6S)-5,6,7,8-tetrahydrofolate</name>
        <dbReference type="ChEBI" id="CHEBI:57453"/>
    </ligand>
</feature>
<feature type="site" description="Plays an important role in substrate specificity" evidence="1">
    <location>
        <position position="233"/>
    </location>
</feature>
<feature type="modified residue" description="N6-(pyridoxal phosphate)lysine" evidence="1">
    <location>
        <position position="234"/>
    </location>
</feature>